<comment type="function">
    <text evidence="1">Usually encoded in the trnK tRNA gene intron. Probably assists in splicing its own and other chloroplast group II introns.</text>
</comment>
<comment type="subcellular location">
    <subcellularLocation>
        <location>Plastid</location>
        <location>Chloroplast</location>
    </subcellularLocation>
</comment>
<comment type="similarity">
    <text evidence="1">Belongs to the intron maturase 2 family. MatK subfamily.</text>
</comment>
<feature type="chain" id="PRO_0000143466" description="Maturase K">
    <location>
        <begin position="1"/>
        <end position="512"/>
    </location>
</feature>
<sequence>MEEFKGYLQKGGFKQQHFLYPLLFQEYIYALAHDQGLNVNASTFNEPPEISGYGNKYSSLLVKRLITRIYQQNSFIYSVNNSKQNRFVGHNKNFYYKMISEGFAIVVEIPFSLRLVSSLKEKKEITKSQNLRSIHSLFPFLEDKFSHLNYVSDILIPYPVHLEILVQILQCWIQDLPTLHLLRLIFHDYHNGSNSIPPNKSSFGFSKDNPRLYRFLYNSYVVECESIFDFLRKSSSYLRSTSFGPLLERTHFYGKMKHIGVTCCNDFQKTLWLFKDPFMHYVRYQGKCIMASKGTHLLMKKWKSYFVNLWQCHFHFWSQPSRIHINQFPHFSFYLLGYLSSVPINPSSAKSQMLENSFLIDSFTPKFETMISIIPMIGSLAKAKFCNLSGNPISKPAWADLSDSDIIDRFGRIYRNLSHYYSGSSKKQSLYRIKYILRLSCARTLARKHKSTVRAFLQRLGSEFFEEFFMEQEKVLSLILPRTSYPLHQLSREPIWYLDIIRINDLVNHFDL</sequence>
<proteinExistence type="inferred from homology"/>
<organism>
    <name type="scientific">Lemna minor</name>
    <name type="common">Common duckweed</name>
    <dbReference type="NCBI Taxonomy" id="4472"/>
    <lineage>
        <taxon>Eukaryota</taxon>
        <taxon>Viridiplantae</taxon>
        <taxon>Streptophyta</taxon>
        <taxon>Embryophyta</taxon>
        <taxon>Tracheophyta</taxon>
        <taxon>Spermatophyta</taxon>
        <taxon>Magnoliopsida</taxon>
        <taxon>Liliopsida</taxon>
        <taxon>Araceae</taxon>
        <taxon>Lemnoideae</taxon>
        <taxon>Lemna</taxon>
    </lineage>
</organism>
<protein>
    <recommendedName>
        <fullName evidence="1">Maturase K</fullName>
    </recommendedName>
    <alternativeName>
        <fullName evidence="1">Intron maturase</fullName>
    </alternativeName>
</protein>
<keyword id="KW-0150">Chloroplast</keyword>
<keyword id="KW-0507">mRNA processing</keyword>
<keyword id="KW-0934">Plastid</keyword>
<keyword id="KW-0694">RNA-binding</keyword>
<keyword id="KW-0819">tRNA processing</keyword>
<evidence type="ECO:0000255" key="1">
    <source>
        <dbReference type="HAMAP-Rule" id="MF_01390"/>
    </source>
</evidence>
<dbReference type="EMBL" id="AY034196">
    <property type="protein sequence ID" value="AAK61567.1"/>
    <property type="molecule type" value="Genomic_DNA"/>
</dbReference>
<dbReference type="EMBL" id="DQ400350">
    <property type="protein sequence ID" value="ABD48476.1"/>
    <property type="molecule type" value="Genomic_DNA"/>
</dbReference>
<dbReference type="RefSeq" id="YP_001595489.1">
    <property type="nucleotide sequence ID" value="NC_010109.1"/>
</dbReference>
<dbReference type="GeneID" id="5787527"/>
<dbReference type="GO" id="GO:0009507">
    <property type="term" value="C:chloroplast"/>
    <property type="evidence" value="ECO:0007669"/>
    <property type="project" value="UniProtKB-SubCell"/>
</dbReference>
<dbReference type="GO" id="GO:0003723">
    <property type="term" value="F:RNA binding"/>
    <property type="evidence" value="ECO:0007669"/>
    <property type="project" value="UniProtKB-KW"/>
</dbReference>
<dbReference type="GO" id="GO:0006397">
    <property type="term" value="P:mRNA processing"/>
    <property type="evidence" value="ECO:0007669"/>
    <property type="project" value="UniProtKB-KW"/>
</dbReference>
<dbReference type="GO" id="GO:0008380">
    <property type="term" value="P:RNA splicing"/>
    <property type="evidence" value="ECO:0007669"/>
    <property type="project" value="UniProtKB-UniRule"/>
</dbReference>
<dbReference type="GO" id="GO:0008033">
    <property type="term" value="P:tRNA processing"/>
    <property type="evidence" value="ECO:0007669"/>
    <property type="project" value="UniProtKB-KW"/>
</dbReference>
<dbReference type="HAMAP" id="MF_01390">
    <property type="entry name" value="MatK"/>
    <property type="match status" value="1"/>
</dbReference>
<dbReference type="InterPro" id="IPR024937">
    <property type="entry name" value="Domain_X"/>
</dbReference>
<dbReference type="InterPro" id="IPR002866">
    <property type="entry name" value="Maturase_MatK"/>
</dbReference>
<dbReference type="InterPro" id="IPR024942">
    <property type="entry name" value="Maturase_MatK_N"/>
</dbReference>
<dbReference type="PANTHER" id="PTHR34811">
    <property type="entry name" value="MATURASE K"/>
    <property type="match status" value="1"/>
</dbReference>
<dbReference type="PANTHER" id="PTHR34811:SF1">
    <property type="entry name" value="MATURASE K"/>
    <property type="match status" value="1"/>
</dbReference>
<dbReference type="Pfam" id="PF01348">
    <property type="entry name" value="Intron_maturas2"/>
    <property type="match status" value="1"/>
</dbReference>
<dbReference type="Pfam" id="PF01824">
    <property type="entry name" value="MatK_N"/>
    <property type="match status" value="1"/>
</dbReference>
<reference key="1">
    <citation type="journal article" date="2002" name="Syst. Bot.">
        <title>Phylogeny and systematics of Lemnaceae, the duckweed family.</title>
        <authorList>
            <person name="Les D.H."/>
            <person name="Crawford D.J."/>
            <person name="Landolt E."/>
            <person name="Gabel J.D."/>
            <person name="Kimball R.T."/>
        </authorList>
        <dbReference type="AGRICOLA" id="IND23289763"/>
    </citation>
    <scope>NUCLEOTIDE SEQUENCE [GENOMIC DNA]</scope>
</reference>
<reference key="2">
    <citation type="journal article" date="2008" name="J. Mol. Evol.">
        <title>Complete sequence of the Duckweed (Lemna minor) chloroplast genome: structural organization and phylogenetic relationships to other angiosperms.</title>
        <authorList>
            <person name="Mardanov A.V."/>
            <person name="Ravin N.V."/>
            <person name="Kuznetsov B.B."/>
            <person name="Samigullin T.H."/>
            <person name="Antonov A.S."/>
            <person name="Kolganova T.V."/>
            <person name="Skyabin K.G."/>
        </authorList>
    </citation>
    <scope>NUCLEOTIDE SEQUENCE [LARGE SCALE GENOMIC DNA]</scope>
</reference>
<gene>
    <name evidence="1" type="primary">matK</name>
</gene>
<name>MATK_LEMMI</name>
<geneLocation type="chloroplast"/>
<accession>Q8WHL7</accession>
<accession>A9L977</accession>